<protein>
    <recommendedName>
        <fullName evidence="1">Putative manganese efflux pump MntP</fullName>
    </recommendedName>
</protein>
<comment type="function">
    <text evidence="1">Probably functions as a manganese efflux pump.</text>
</comment>
<comment type="subcellular location">
    <subcellularLocation>
        <location evidence="1">Cell membrane</location>
        <topology evidence="1">Multi-pass membrane protein</topology>
    </subcellularLocation>
</comment>
<comment type="similarity">
    <text evidence="1">Belongs to the MntP (TC 9.B.29) family.</text>
</comment>
<proteinExistence type="inferred from homology"/>
<reference key="1">
    <citation type="submission" date="2007-10" db="EMBL/GenBank/DDBJ databases">
        <title>Complete sequence of chromosome of Desulforudis audaxviator MP104C.</title>
        <authorList>
            <person name="Copeland A."/>
            <person name="Lucas S."/>
            <person name="Lapidus A."/>
            <person name="Barry K."/>
            <person name="Glavina del Rio T."/>
            <person name="Dalin E."/>
            <person name="Tice H."/>
            <person name="Bruce D."/>
            <person name="Pitluck S."/>
            <person name="Lowry S.R."/>
            <person name="Larimer F."/>
            <person name="Land M.L."/>
            <person name="Hauser L."/>
            <person name="Kyrpides N."/>
            <person name="Ivanova N.N."/>
            <person name="Richardson P."/>
        </authorList>
    </citation>
    <scope>NUCLEOTIDE SEQUENCE [LARGE SCALE GENOMIC DNA]</scope>
    <source>
        <strain>MP104C</strain>
    </source>
</reference>
<keyword id="KW-1003">Cell membrane</keyword>
<keyword id="KW-0406">Ion transport</keyword>
<keyword id="KW-0464">Manganese</keyword>
<keyword id="KW-0472">Membrane</keyword>
<keyword id="KW-1185">Reference proteome</keyword>
<keyword id="KW-0812">Transmembrane</keyword>
<keyword id="KW-1133">Transmembrane helix</keyword>
<keyword id="KW-0813">Transport</keyword>
<organism>
    <name type="scientific">Desulforudis audaxviator (strain MP104C)</name>
    <dbReference type="NCBI Taxonomy" id="477974"/>
    <lineage>
        <taxon>Bacteria</taxon>
        <taxon>Bacillati</taxon>
        <taxon>Bacillota</taxon>
        <taxon>Clostridia</taxon>
        <taxon>Thermoanaerobacterales</taxon>
        <taxon>Candidatus Desulforudaceae</taxon>
        <taxon>Candidatus Desulforudis</taxon>
    </lineage>
</organism>
<feature type="chain" id="PRO_1000200020" description="Putative manganese efflux pump MntP">
    <location>
        <begin position="1"/>
        <end position="180"/>
    </location>
</feature>
<feature type="transmembrane region" description="Helical" evidence="1">
    <location>
        <begin position="6"/>
        <end position="26"/>
    </location>
</feature>
<feature type="transmembrane region" description="Helical" evidence="1">
    <location>
        <begin position="33"/>
        <end position="53"/>
    </location>
</feature>
<feature type="transmembrane region" description="Helical" evidence="1">
    <location>
        <begin position="63"/>
        <end position="83"/>
    </location>
</feature>
<feature type="transmembrane region" description="Helical" evidence="1">
    <location>
        <begin position="101"/>
        <end position="121"/>
    </location>
</feature>
<feature type="transmembrane region" description="Helical" evidence="1">
    <location>
        <begin position="130"/>
        <end position="150"/>
    </location>
</feature>
<name>MNTP_DESAP</name>
<evidence type="ECO:0000255" key="1">
    <source>
        <dbReference type="HAMAP-Rule" id="MF_01521"/>
    </source>
</evidence>
<dbReference type="EMBL" id="CP000860">
    <property type="protein sequence ID" value="ACA60637.1"/>
    <property type="molecule type" value="Genomic_DNA"/>
</dbReference>
<dbReference type="RefSeq" id="WP_012303212.1">
    <property type="nucleotide sequence ID" value="NC_010424.1"/>
</dbReference>
<dbReference type="STRING" id="477974.Daud_2150"/>
<dbReference type="KEGG" id="dau:Daud_2150"/>
<dbReference type="eggNOG" id="COG1971">
    <property type="taxonomic scope" value="Bacteria"/>
</dbReference>
<dbReference type="HOGENOM" id="CLU_096410_1_1_9"/>
<dbReference type="OrthoDB" id="1679700at2"/>
<dbReference type="Proteomes" id="UP000008544">
    <property type="component" value="Chromosome"/>
</dbReference>
<dbReference type="GO" id="GO:0005886">
    <property type="term" value="C:plasma membrane"/>
    <property type="evidence" value="ECO:0007669"/>
    <property type="project" value="UniProtKB-SubCell"/>
</dbReference>
<dbReference type="GO" id="GO:0005384">
    <property type="term" value="F:manganese ion transmembrane transporter activity"/>
    <property type="evidence" value="ECO:0007669"/>
    <property type="project" value="UniProtKB-UniRule"/>
</dbReference>
<dbReference type="HAMAP" id="MF_01521">
    <property type="entry name" value="MntP_pump"/>
    <property type="match status" value="1"/>
</dbReference>
<dbReference type="InterPro" id="IPR003810">
    <property type="entry name" value="Mntp/YtaF"/>
</dbReference>
<dbReference type="InterPro" id="IPR022929">
    <property type="entry name" value="Put_MntP"/>
</dbReference>
<dbReference type="PANTHER" id="PTHR35529">
    <property type="entry name" value="MANGANESE EFFLUX PUMP MNTP-RELATED"/>
    <property type="match status" value="1"/>
</dbReference>
<dbReference type="PANTHER" id="PTHR35529:SF1">
    <property type="entry name" value="MANGANESE EFFLUX PUMP MNTP-RELATED"/>
    <property type="match status" value="1"/>
</dbReference>
<dbReference type="Pfam" id="PF02659">
    <property type="entry name" value="Mntp"/>
    <property type="match status" value="1"/>
</dbReference>
<sequence>MTAGTVLLLAGALGTDAFSLCLGLGLNGFRRRMAWMLVGLIVALHVVLPVAGWYAGEFTGRLVGRWAAYLGAAILFYLGVKMVRESLAEGRTATGKLERAGFLGLTVLAGSVSMDALSVGFTLGTAGAALLLTAGVIGLVAGLMSAAAFVLAHRVEDWVGRRAELLGGLVLIGVGLRLLF</sequence>
<gene>
    <name evidence="1" type="primary">mntP</name>
    <name type="ordered locus">Daud_2150</name>
</gene>
<accession>B1I6K8</accession>